<evidence type="ECO:0000250" key="1">
    <source>
        <dbReference type="UniProtKB" id="Q96T53"/>
    </source>
</evidence>
<evidence type="ECO:0000255" key="2"/>
<evidence type="ECO:0000269" key="3">
    <source>
    </source>
</evidence>
<evidence type="ECO:0000269" key="4">
    <source>
    </source>
</evidence>
<evidence type="ECO:0000269" key="5">
    <source>
    </source>
</evidence>
<evidence type="ECO:0000269" key="6">
    <source>
    </source>
</evidence>
<evidence type="ECO:0000269" key="7">
    <source>
    </source>
</evidence>
<evidence type="ECO:0000269" key="8">
    <source>
    </source>
</evidence>
<evidence type="ECO:0000305" key="9"/>
<evidence type="ECO:0000305" key="10">
    <source>
    </source>
</evidence>
<evidence type="ECO:0000305" key="11">
    <source>
    </source>
</evidence>
<evidence type="ECO:0000305" key="12">
    <source>
    </source>
</evidence>
<evidence type="ECO:0000312" key="13">
    <source>
        <dbReference type="MGI" id="MGI:2685017"/>
    </source>
</evidence>
<proteinExistence type="evidence at protein level"/>
<feature type="chain" id="PRO_0000329073" description="Membrane-bound ghrelin O-acyltransferase MBOAT4">
    <location>
        <begin position="1"/>
        <end position="435"/>
    </location>
</feature>
<feature type="chain" id="PRO_0000454294" description="44,4 kDa fragment" evidence="7">
    <location>
        <begin position="56"/>
        <end position="435"/>
    </location>
</feature>
<feature type="topological domain" description="Lumenal" evidence="9">
    <location>
        <begin position="1"/>
        <end position="5"/>
    </location>
</feature>
<feature type="transmembrane region" description="Helical" evidence="2 12">
    <location>
        <begin position="6"/>
        <end position="26"/>
    </location>
</feature>
<feature type="topological domain" description="Cytoplasmic" evidence="9">
    <location>
        <begin position="27"/>
        <end position="40"/>
    </location>
</feature>
<feature type="transmembrane region" description="Helical" evidence="2 12">
    <location>
        <begin position="41"/>
        <end position="56"/>
    </location>
</feature>
<feature type="topological domain" description="Lumenal" evidence="9">
    <location>
        <begin position="57"/>
        <end position="59"/>
    </location>
</feature>
<feature type="transmembrane region" description="Helical" evidence="12">
    <location>
        <begin position="60"/>
        <end position="76"/>
    </location>
</feature>
<feature type="topological domain" description="Cytoplasmic" evidence="9">
    <location>
        <begin position="77"/>
        <end position="82"/>
    </location>
</feature>
<feature type="transmembrane region" description="Helical" evidence="12">
    <location>
        <begin position="83"/>
        <end position="101"/>
    </location>
</feature>
<feature type="topological domain" description="Lumenal" evidence="9">
    <location>
        <begin position="102"/>
        <end position="120"/>
    </location>
</feature>
<feature type="transmembrane region" description="Helical" evidence="12">
    <location>
        <begin position="121"/>
        <end position="136"/>
    </location>
</feature>
<feature type="topological domain" description="Cytoplasmic" evidence="9">
    <location>
        <begin position="137"/>
        <end position="206"/>
    </location>
</feature>
<feature type="transmembrane region" description="Helical" evidence="12">
    <location>
        <begin position="207"/>
        <end position="227"/>
    </location>
</feature>
<feature type="topological domain" description="Lumenal" evidence="9">
    <location>
        <begin position="228"/>
        <end position="240"/>
    </location>
</feature>
<feature type="transmembrane region" description="Helical" evidence="2 12">
    <location>
        <begin position="241"/>
        <end position="261"/>
    </location>
</feature>
<feature type="topological domain" description="Cytoplasmic" evidence="9">
    <location>
        <begin position="262"/>
        <end position="324"/>
    </location>
</feature>
<feature type="transmembrane region" description="Helical">
    <location>
        <begin position="325"/>
        <end position="338"/>
    </location>
</feature>
<feature type="topological domain" description="Lumenal" evidence="9">
    <location>
        <begin position="339"/>
        <end position="340"/>
    </location>
</feature>
<feature type="transmembrane region" description="Helical">
    <location>
        <begin position="341"/>
        <end position="357"/>
    </location>
</feature>
<feature type="topological domain" description="Cytoplasmic" evidence="9">
    <location>
        <begin position="358"/>
        <end position="376"/>
    </location>
</feature>
<feature type="transmembrane region" description="Helical" evidence="2">
    <location>
        <begin position="377"/>
        <end position="397"/>
    </location>
</feature>
<feature type="topological domain" description="Lumenal" evidence="9">
    <location>
        <begin position="398"/>
        <end position="407"/>
    </location>
</feature>
<feature type="transmembrane region" description="Helical" evidence="2">
    <location>
        <begin position="408"/>
        <end position="428"/>
    </location>
</feature>
<feature type="topological domain" description="Cytoplasmic" evidence="9">
    <location>
        <begin position="429"/>
        <end position="435"/>
    </location>
</feature>
<feature type="active site" evidence="10">
    <location>
        <position position="307"/>
    </location>
</feature>
<feature type="active site" evidence="10">
    <location>
        <position position="338"/>
    </location>
</feature>
<feature type="site" description="Cleavage" evidence="12">
    <location>
        <begin position="55"/>
        <end position="56"/>
    </location>
</feature>
<feature type="mutagenesis site" description="Does not affect protein cleavage." evidence="7">
    <original>N</original>
    <variation>H</variation>
    <location>
        <position position="27"/>
    </location>
</feature>
<feature type="mutagenesis site" description="Loss of 44,4 kDa fragment." evidence="7">
    <original>M</original>
    <variation>A</variation>
    <location>
        <position position="56"/>
    </location>
</feature>
<feature type="mutagenesis site" description="Loss of 44,4 kDa form." evidence="7">
    <original>M</original>
    <variation>I</variation>
    <location>
        <position position="56"/>
    </location>
</feature>
<feature type="mutagenesis site" description="Does not glycosylated." evidence="7">
    <original>I</original>
    <variation>N</variation>
    <location>
        <position position="149"/>
    </location>
</feature>
<feature type="mutagenesis site" description="No effect on ability to acylate ghrelin." evidence="3">
    <original>C</original>
    <variation>A</variation>
    <location>
        <position position="181"/>
    </location>
</feature>
<feature type="mutagenesis site" description="Does not glycosylated." evidence="7">
    <original>Q</original>
    <variation>N</variation>
    <location>
        <position position="191"/>
    </location>
</feature>
<feature type="mutagenesis site" description="Does not affect protein cleavage." evidence="7">
    <original>K</original>
    <variation>R</variation>
    <location>
        <position position="219"/>
    </location>
</feature>
<feature type="mutagenesis site" description="Does not affect protein cleavage." evidence="7">
    <original>K</original>
    <variation>R</variation>
    <location>
        <position position="252"/>
    </location>
</feature>
<feature type="mutagenesis site" description="Does not glycosylated." evidence="7">
    <original>I</original>
    <variation>N</variation>
    <location>
        <position position="290"/>
    </location>
</feature>
<feature type="mutagenesis site" description="Does not glycosylated." evidence="7">
    <original>L</original>
    <variation>N</variation>
    <location>
        <position position="293"/>
    </location>
</feature>
<feature type="mutagenesis site" description="Does not glycosylated." evidence="7">
    <original>R</original>
    <variation>N</variation>
    <location>
        <position position="298"/>
    </location>
</feature>
<feature type="mutagenesis site" description="Abolished ability to acylate ghrelin." evidence="3">
    <original>N</original>
    <variation>A</variation>
    <location>
        <position position="307"/>
    </location>
</feature>
<feature type="mutagenesis site" description="Does not affect protein cleavage." evidence="7">
    <original>N</original>
    <variation>H</variation>
    <location>
        <position position="307"/>
    </location>
</feature>
<feature type="mutagenesis site" description="Does not affect protein cleavage." evidence="7">
    <original>S</original>
    <variation>A</variation>
    <location>
        <position position="309"/>
    </location>
</feature>
<feature type="mutagenesis site" description="Does not affect protein cleavage." evidence="7">
    <original>K</original>
    <variation>R</variation>
    <location>
        <position position="321"/>
    </location>
</feature>
<feature type="mutagenesis site" description="Abolished ability to acylate ghrelin. Does not affect proteic cleavage. loss of serine O-acyltransferase activity." evidence="3 5 7">
    <original>H</original>
    <variation>A</variation>
    <location>
        <position position="338"/>
    </location>
</feature>
<feature type="mutagenesis site" description="Does not affect protein cleavage." evidence="7">
    <original>H</original>
    <variation>N</variation>
    <location>
        <position position="338"/>
    </location>
</feature>
<feature type="mutagenesis site" description="Does not affect protein cleavage." evidence="7">
    <original>K</original>
    <variation>R</variation>
    <location>
        <position position="356"/>
    </location>
</feature>
<feature type="mutagenesis site" description="Does not affect protein cleavage." evidence="7">
    <original>N</original>
    <variation>H</variation>
    <location>
        <position position="366"/>
    </location>
</feature>
<feature type="mutagenesis site" description="Does not affect protein cleavage." evidence="7">
    <original>C</original>
    <variation>A</variation>
    <location>
        <position position="368"/>
    </location>
</feature>
<feature type="mutagenesis site" description="Does not affect protein cleavage." evidence="7">
    <original>K</original>
    <variation>R</variation>
    <location>
        <position position="431"/>
    </location>
</feature>
<feature type="mutagenesis site" description="Does not affect protein cleavage." evidence="7">
    <original>K</original>
    <variation>R</variation>
    <location>
        <position position="433"/>
    </location>
</feature>
<feature type="sequence conflict" description="In Ref. 4; AAI47845/AAI47850." evidence="9" ref="4">
    <original>I</original>
    <variation>V</variation>
    <location>
        <position position="31"/>
    </location>
</feature>
<feature type="sequence conflict" description="In Ref. 4; AAI47845/AAI47850." evidence="9" ref="4">
    <original>F</original>
    <variation>L</variation>
    <location>
        <position position="53"/>
    </location>
</feature>
<keyword id="KW-0012">Acyltransferase</keyword>
<keyword id="KW-0256">Endoplasmic reticulum</keyword>
<keyword id="KW-0472">Membrane</keyword>
<keyword id="KW-1185">Reference proteome</keyword>
<keyword id="KW-0808">Transferase</keyword>
<keyword id="KW-0812">Transmembrane</keyword>
<keyword id="KW-1133">Transmembrane helix</keyword>
<name>MBOA4_MOUSE</name>
<accession>P0C7A3</accession>
<accession>B1Q004</accession>
<accession>B2RWL6</accession>
<protein>
    <recommendedName>
        <fullName evidence="1">Membrane-bound ghrelin O-acyltransferase MBOAT4</fullName>
        <ecNumber evidence="4 5 6 7 8 10">2.3.1.-</ecNumber>
    </recommendedName>
    <alternativeName>
        <fullName>Membrane-bound O-acyltransferase domain-containing protein 4</fullName>
        <shortName>O-acyltransferase domain-containing protein 4</shortName>
    </alternativeName>
    <component>
        <recommendedName>
            <fullName evidence="12">44,4 kDa fragment</fullName>
        </recommendedName>
    </component>
</protein>
<sequence>MDWLQLFFLHPLSFYQGAAFPFALLFNYLCILDTFSTRARYLFLLAGGGVLAFAAMGPYSLLIFIPALCAVALVSFLSPQEVHRLTFFFQMGWQTLCHLGLHYTEYYLGEPPPVRFYITLSSLMLLTQRVTSLSLDICEGKVEAPRRGIRSKSSFSEHLWDALPHFSYLLFFPALLGGSLCSFRRFQACVQRSSSLYPSISFRALTWRGLQILGLECLKVALRSAVSAGAGLDDCQRLECIYLMWSTAWLFKLTYYSHWILDDSLLHAAGFGAEAGQGPGEEGYVPDVDIWTLETTHRISLFARQWNRSTALWLRRLVFRKSRRWPLLQTFAFSAWWHGLHPGQVFGFLCWSVMVKADYLIHTFANVCIRSWPLRLLYRALTWAHTQLIIAYIMLAVEGRSLSSLCQLCCSYNSLFPVMYGLLLFLLAERKDKRN</sequence>
<organism>
    <name type="scientific">Mus musculus</name>
    <name type="common">Mouse</name>
    <dbReference type="NCBI Taxonomy" id="10090"/>
    <lineage>
        <taxon>Eukaryota</taxon>
        <taxon>Metazoa</taxon>
        <taxon>Chordata</taxon>
        <taxon>Craniata</taxon>
        <taxon>Vertebrata</taxon>
        <taxon>Euteleostomi</taxon>
        <taxon>Mammalia</taxon>
        <taxon>Eutheria</taxon>
        <taxon>Euarchontoglires</taxon>
        <taxon>Glires</taxon>
        <taxon>Rodentia</taxon>
        <taxon>Myomorpha</taxon>
        <taxon>Muroidea</taxon>
        <taxon>Muridae</taxon>
        <taxon>Murinae</taxon>
        <taxon>Mus</taxon>
        <taxon>Mus</taxon>
    </lineage>
</organism>
<comment type="function">
    <text evidence="3 4 5 6 7 8">Catalyzes ghrelin acylation at 'Ser-3' using preferentially octanoyl-CoA, hexanoyl-CoA and decanoyl-CoA as acyl-CoA donors leading to ghrelin activity (PubMed:18267071, PubMed:18443287, PubMed:18669668, PubMed:19501572, PubMed:24045953, PubMed:28134508). In vitro also uses acyl-CoA donors of different lengths from short-chain (C2) to long-chain fatty acids (C16) knowing that acyl-CoA donors from butanoyl-CoA (C4) to dodecanoyl-CoA (C12) are more efficient compared to longer acyl-CoA donors, such as myristoyl-CoA (C14) and palmitoyl-CoA (C16) that are not efficient (PubMed:19501572).</text>
</comment>
<comment type="function">
    <molecule>44,4 kDa fragment</molecule>
    <text evidence="7">Inactive octanoyltransferase activity.</text>
</comment>
<comment type="catalytic activity">
    <reaction evidence="4 5 6 7 8 10">
        <text>octanoyl-CoA + L-seryl-[protein] = O-octanoyl-L-seryl-[protein] + CoA</text>
        <dbReference type="Rhea" id="RHEA:59964"/>
        <dbReference type="Rhea" id="RHEA-COMP:9863"/>
        <dbReference type="Rhea" id="RHEA-COMP:15484"/>
        <dbReference type="ChEBI" id="CHEBI:29999"/>
        <dbReference type="ChEBI" id="CHEBI:57287"/>
        <dbReference type="ChEBI" id="CHEBI:57386"/>
        <dbReference type="ChEBI" id="CHEBI:143548"/>
    </reaction>
    <physiologicalReaction direction="left-to-right" evidence="4 6 7">
        <dbReference type="Rhea" id="RHEA:59965"/>
    </physiologicalReaction>
</comment>
<comment type="catalytic activity">
    <reaction evidence="6">
        <text>hexanoyl-CoA + L-seryl-[protein] = O-hexanoyl-L-seryl-[protein] + CoA</text>
        <dbReference type="Rhea" id="RHEA:68284"/>
        <dbReference type="Rhea" id="RHEA-COMP:9863"/>
        <dbReference type="Rhea" id="RHEA-COMP:17463"/>
        <dbReference type="ChEBI" id="CHEBI:29999"/>
        <dbReference type="ChEBI" id="CHEBI:57287"/>
        <dbReference type="ChEBI" id="CHEBI:62620"/>
        <dbReference type="ChEBI" id="CHEBI:177289"/>
    </reaction>
    <physiologicalReaction direction="left-to-right" evidence="11">
        <dbReference type="Rhea" id="RHEA:68285"/>
    </physiologicalReaction>
</comment>
<comment type="catalytic activity">
    <reaction evidence="6">
        <text>decanoyl-CoA + L-seryl-[protein] = O-decanoyl-L-seryl-[protein] + CoA</text>
        <dbReference type="Rhea" id="RHEA:59972"/>
        <dbReference type="Rhea" id="RHEA-COMP:9863"/>
        <dbReference type="Rhea" id="RHEA-COMP:15486"/>
        <dbReference type="ChEBI" id="CHEBI:29999"/>
        <dbReference type="ChEBI" id="CHEBI:57287"/>
        <dbReference type="ChEBI" id="CHEBI:61430"/>
        <dbReference type="ChEBI" id="CHEBI:143549"/>
    </reaction>
    <physiologicalReaction direction="left-to-right" evidence="11">
        <dbReference type="Rhea" id="RHEA:59973"/>
    </physiologicalReaction>
</comment>
<comment type="catalytic activity">
    <reaction evidence="1">
        <text>L-seryl-[protein] + acetyl-CoA = O-acetyl-L-seryl-[protein] + CoA</text>
        <dbReference type="Rhea" id="RHEA:59392"/>
        <dbReference type="Rhea" id="RHEA-COMP:9863"/>
        <dbReference type="Rhea" id="RHEA-COMP:15352"/>
        <dbReference type="ChEBI" id="CHEBI:29999"/>
        <dbReference type="ChEBI" id="CHEBI:57287"/>
        <dbReference type="ChEBI" id="CHEBI:57288"/>
        <dbReference type="ChEBI" id="CHEBI:141128"/>
    </reaction>
    <physiologicalReaction direction="left-to-right" evidence="1">
        <dbReference type="Rhea" id="RHEA:59393"/>
    </physiologicalReaction>
</comment>
<comment type="catalytic activity">
    <reaction evidence="1">
        <text>L-seryl-[protein] + butanoyl-CoA = O-butanoyl-L-seryl-[protein] + CoA</text>
        <dbReference type="Rhea" id="RHEA:68276"/>
        <dbReference type="Rhea" id="RHEA-COMP:9863"/>
        <dbReference type="Rhea" id="RHEA-COMP:17461"/>
        <dbReference type="ChEBI" id="CHEBI:29999"/>
        <dbReference type="ChEBI" id="CHEBI:57287"/>
        <dbReference type="ChEBI" id="CHEBI:57371"/>
        <dbReference type="ChEBI" id="CHEBI:177287"/>
    </reaction>
    <physiologicalReaction direction="left-to-right" evidence="1">
        <dbReference type="Rhea" id="RHEA:68277"/>
    </physiologicalReaction>
</comment>
<comment type="catalytic activity">
    <reaction evidence="1">
        <text>pentanoyl-CoA + L-seryl-[protein] = O-pentanoyl-L-seryl-[protein] + CoA</text>
        <dbReference type="Rhea" id="RHEA:68280"/>
        <dbReference type="Rhea" id="RHEA-COMP:9863"/>
        <dbReference type="Rhea" id="RHEA-COMP:17462"/>
        <dbReference type="ChEBI" id="CHEBI:29999"/>
        <dbReference type="ChEBI" id="CHEBI:57287"/>
        <dbReference type="ChEBI" id="CHEBI:57389"/>
        <dbReference type="ChEBI" id="CHEBI:177288"/>
    </reaction>
    <physiologicalReaction direction="left-to-right" evidence="1">
        <dbReference type="Rhea" id="RHEA:68281"/>
    </physiologicalReaction>
</comment>
<comment type="catalytic activity">
    <reaction evidence="1">
        <text>heptanoyl-CoA + L-seryl-[protein] = O-heptanoyl-L-seryl-[protein] + CoA</text>
        <dbReference type="Rhea" id="RHEA:68288"/>
        <dbReference type="Rhea" id="RHEA-COMP:9863"/>
        <dbReference type="Rhea" id="RHEA-COMP:17464"/>
        <dbReference type="ChEBI" id="CHEBI:29999"/>
        <dbReference type="ChEBI" id="CHEBI:57287"/>
        <dbReference type="ChEBI" id="CHEBI:78811"/>
        <dbReference type="ChEBI" id="CHEBI:177290"/>
    </reaction>
    <physiologicalReaction direction="left-to-right" evidence="1">
        <dbReference type="Rhea" id="RHEA:68289"/>
    </physiologicalReaction>
</comment>
<comment type="catalytic activity">
    <reaction evidence="1">
        <text>nonanoyl-CoA + L-seryl-[protein] = O-nonanoyl-L-seryl-[protein] + CoA</text>
        <dbReference type="Rhea" id="RHEA:68292"/>
        <dbReference type="Rhea" id="RHEA-COMP:9863"/>
        <dbReference type="Rhea" id="RHEA-COMP:17465"/>
        <dbReference type="ChEBI" id="CHEBI:29999"/>
        <dbReference type="ChEBI" id="CHEBI:57287"/>
        <dbReference type="ChEBI" id="CHEBI:76291"/>
        <dbReference type="ChEBI" id="CHEBI:177291"/>
    </reaction>
    <physiologicalReaction direction="left-to-right" evidence="1">
        <dbReference type="Rhea" id="RHEA:68293"/>
    </physiologicalReaction>
</comment>
<comment type="catalytic activity">
    <reaction evidence="1">
        <text>L-seryl-[protein] + dodecanoyl-CoA = O-dodecanoyl-L-seryl-[protein] + CoA</text>
        <dbReference type="Rhea" id="RHEA:68296"/>
        <dbReference type="Rhea" id="RHEA-COMP:9863"/>
        <dbReference type="Rhea" id="RHEA-COMP:17466"/>
        <dbReference type="ChEBI" id="CHEBI:29999"/>
        <dbReference type="ChEBI" id="CHEBI:57287"/>
        <dbReference type="ChEBI" id="CHEBI:57375"/>
        <dbReference type="ChEBI" id="CHEBI:177292"/>
    </reaction>
    <physiologicalReaction direction="left-to-right" evidence="1">
        <dbReference type="Rhea" id="RHEA:68297"/>
    </physiologicalReaction>
</comment>
<comment type="catalytic activity">
    <reaction evidence="1">
        <text>L-seryl-[protein] + tetradecanoyl-CoA = O-tetradecanoyl-L-seryl-[protein] + CoA</text>
        <dbReference type="Rhea" id="RHEA:68300"/>
        <dbReference type="Rhea" id="RHEA-COMP:9863"/>
        <dbReference type="Rhea" id="RHEA-COMP:17467"/>
        <dbReference type="ChEBI" id="CHEBI:29999"/>
        <dbReference type="ChEBI" id="CHEBI:57287"/>
        <dbReference type="ChEBI" id="CHEBI:57385"/>
        <dbReference type="ChEBI" id="CHEBI:177293"/>
    </reaction>
    <physiologicalReaction direction="left-to-right" evidence="1">
        <dbReference type="Rhea" id="RHEA:68301"/>
    </physiologicalReaction>
</comment>
<comment type="catalytic activity">
    <reaction evidence="1">
        <text>a fatty acyl-CoA + L-seryl-[protein] = O-fatty acyl-L-seryl-[protein] + CoA</text>
        <dbReference type="Rhea" id="RHEA:68272"/>
        <dbReference type="Rhea" id="RHEA-COMP:9863"/>
        <dbReference type="Rhea" id="RHEA-COMP:17460"/>
        <dbReference type="ChEBI" id="CHEBI:29999"/>
        <dbReference type="ChEBI" id="CHEBI:57287"/>
        <dbReference type="ChEBI" id="CHEBI:77636"/>
        <dbReference type="ChEBI" id="CHEBI:177286"/>
    </reaction>
    <physiologicalReaction direction="left-to-right" evidence="1">
        <dbReference type="Rhea" id="RHEA:68273"/>
    </physiologicalReaction>
</comment>
<comment type="activity regulation">
    <text evidence="6 8">Inhibited by 1-[2-cyano-3,12-dioxooleana-1,9(11)- dien-28-oyl]ethylamide (CDDO-EA) with an IC(50) of 60 uM (PubMed:28134508). Inhibited by Fe3+ and Cu2+ and the O-acyltransferase activity is completely blocked over 5 mM Fe3+ and 0.5 mM Cu2+ (PubMed:19501572).</text>
</comment>
<comment type="biophysicochemical properties">
    <kinetics>
        <KM evidence="6">294 uM for n-hexanoyl-CoA</KM>
        <KM evidence="6">13.6 uM for n-octanoyl-CoA</KM>
        <KM evidence="5">0.6 uM for octanoyl CoA</KM>
        <KM evidence="5">6 uM for proghrelin</KM>
    </kinetics>
    <phDependence>
        <text evidence="6">Optimum pH is 7.0-7.5.</text>
    </phDependence>
    <temperatureDependence>
        <text evidence="6">Optimum temperature is 37-50 degrees Celsius.</text>
    </temperatureDependence>
</comment>
<comment type="subunit">
    <text evidence="7">Monomer.</text>
</comment>
<comment type="subcellular location">
    <subcellularLocation>
        <location evidence="3 7">Endoplasmic reticulum membrane</location>
        <topology evidence="3">Multi-pass membrane protein</topology>
    </subcellularLocation>
</comment>
<comment type="tissue specificity">
    <text evidence="3">Highly expressed in stomach and pancreas (PubMed:18267071). Lower expression in small intestine and colon (PubMed:18267071). Very low expression in testis (PubMed:18267071).</text>
</comment>
<comment type="PTM">
    <text evidence="7">Not glycosylated.</text>
</comment>
<comment type="disruption phenotype">
    <text evidence="4">Mice display a complete lack of octanoylated ghrelin in blood.</text>
</comment>
<comment type="similarity">
    <text evidence="9">Belongs to the membrane-bound acyltransferase family.</text>
</comment>
<comment type="sequence caution" evidence="9">
    <conflict type="erroneous initiation">
        <sequence resource="EMBL-CDS" id="AAI47845"/>
    </conflict>
</comment>
<comment type="sequence caution" evidence="9">
    <conflict type="erroneous initiation">
        <sequence resource="EMBL-CDS" id="AAI47850"/>
    </conflict>
</comment>
<reference key="1">
    <citation type="journal article" date="2008" name="Cell">
        <title>Identification of the acyltransferase that octanoylates ghrelin, an appetite-stimulating peptide hormone.</title>
        <authorList>
            <person name="Yang J."/>
            <person name="Brown M.S."/>
            <person name="Liang G."/>
            <person name="Grishin N.V."/>
            <person name="Goldstein J.L."/>
        </authorList>
    </citation>
    <scope>NUCLEOTIDE SEQUENCE [MRNA]</scope>
    <scope>FUNCTION</scope>
    <scope>SUBCELLULAR LOCATION</scope>
    <scope>TISSUE SPECIFICITY</scope>
    <scope>MUTAGENESIS OF CYS-181; ASN-307 AND HIS-338</scope>
    <scope>CATALYTIC ACTIVITY</scope>
</reference>
<reference key="2">
    <citation type="journal article" date="2008" name="Proc. Natl. Acad. Sci. U.S.A.">
        <title>Ghrelin octanoylation mediated by an orphan lipid transferase.</title>
        <authorList>
            <person name="Gutierrez J.A."/>
            <person name="Solenberg P.J."/>
            <person name="Perkins D.R."/>
            <person name="Willency J.A."/>
            <person name="Knierman M.D."/>
            <person name="Jin Z."/>
            <person name="Witcher D.R."/>
            <person name="Luo S."/>
            <person name="Onyia J.E."/>
            <person name="Hale J.E."/>
        </authorList>
    </citation>
    <scope>NUCLEOTIDE SEQUENCE [MRNA]</scope>
    <scope>FUNCTION</scope>
    <scope>DISRUPTION PHENOTYPE</scope>
    <scope>CATALYTIC ACTIVITY</scope>
    <scope>TISSUE SPECIFICITY</scope>
    <source>
        <strain>BALB/cJ</strain>
    </source>
</reference>
<reference key="3">
    <citation type="journal article" date="2009" name="PLoS Biol.">
        <title>Lineage-specific biology revealed by a finished genome assembly of the mouse.</title>
        <authorList>
            <person name="Church D.M."/>
            <person name="Goodstadt L."/>
            <person name="Hillier L.W."/>
            <person name="Zody M.C."/>
            <person name="Goldstein S."/>
            <person name="She X."/>
            <person name="Bult C.J."/>
            <person name="Agarwala R."/>
            <person name="Cherry J.L."/>
            <person name="DiCuccio M."/>
            <person name="Hlavina W."/>
            <person name="Kapustin Y."/>
            <person name="Meric P."/>
            <person name="Maglott D."/>
            <person name="Birtle Z."/>
            <person name="Marques A.C."/>
            <person name="Graves T."/>
            <person name="Zhou S."/>
            <person name="Teague B."/>
            <person name="Potamousis K."/>
            <person name="Churas C."/>
            <person name="Place M."/>
            <person name="Herschleb J."/>
            <person name="Runnheim R."/>
            <person name="Forrest D."/>
            <person name="Amos-Landgraf J."/>
            <person name="Schwartz D.C."/>
            <person name="Cheng Z."/>
            <person name="Lindblad-Toh K."/>
            <person name="Eichler E.E."/>
            <person name="Ponting C.P."/>
        </authorList>
    </citation>
    <scope>NUCLEOTIDE SEQUENCE [LARGE SCALE GENOMIC DNA]</scope>
    <source>
        <strain>C57BL/6J</strain>
    </source>
</reference>
<reference key="4">
    <citation type="journal article" date="2004" name="Genome Res.">
        <title>The status, quality, and expansion of the NIH full-length cDNA project: the Mammalian Gene Collection (MGC).</title>
        <authorList>
            <consortium name="The MGC Project Team"/>
        </authorList>
    </citation>
    <scope>NUCLEOTIDE SEQUENCE [LARGE SCALE MRNA]</scope>
</reference>
<reference key="5">
    <citation type="journal article" date="2008" name="Proc. Natl. Acad. Sci. U.S.A.">
        <title>Inhibition of ghrelin O-acyltransferase (GOAT) by octanoylated pentapeptides.</title>
        <authorList>
            <person name="Yang J."/>
            <person name="Zhao T.J."/>
            <person name="Goldstein J.L."/>
            <person name="Brown M.S."/>
        </authorList>
    </citation>
    <scope>FUNCTION</scope>
    <scope>CATALYTIC ACTIVITY</scope>
    <scope>MUTAGENESIS OF HIS-338</scope>
    <scope>BIOPHYSICOCHEMICAL PROPERTIES</scope>
</reference>
<reference key="6">
    <citation type="journal article" date="2009" name="Biochem. Biophys. Res. Commun.">
        <title>Ghrelin O-acyltransferase (GOAT) has a preference for n-hexanoyl-CoA over n-octanoyl-CoA as an acyl donor.</title>
        <authorList>
            <person name="Ohgusu H."/>
            <person name="Shirouzu K."/>
            <person name="Nakamura Y."/>
            <person name="Nakashima Y."/>
            <person name="Ida T."/>
            <person name="Sato T."/>
            <person name="Kojima M."/>
        </authorList>
    </citation>
    <scope>FUNCTION</scope>
    <scope>CATALYTIC ACTIVITY</scope>
    <scope>BIOPHYSICOCHEMICAL PROPERTIES</scope>
    <scope>ACTIVITY REGULATION</scope>
</reference>
<reference key="7">
    <citation type="journal article" date="2013" name="J. Biol. Chem.">
        <title>Architectural organization of the metabolic regulatory enzyme ghrelin O-acyltransferase.</title>
        <authorList>
            <person name="Taylor M.S."/>
            <person name="Ruch T.R."/>
            <person name="Hsiao P.Y."/>
            <person name="Hwang Y."/>
            <person name="Zhang P."/>
            <person name="Dai L."/>
            <person name="Huang C.R.L."/>
            <person name="Berndsen C.E."/>
            <person name="Kim M.S."/>
            <person name="Pandey A."/>
            <person name="Wolberger C."/>
            <person name="Marmorstein R."/>
            <person name="Machamer C."/>
            <person name="Boeke J.D."/>
            <person name="Cole P.A."/>
        </authorList>
    </citation>
    <scope>SUBCELLULAR LOCATION</scope>
    <scope>TOPOLOGY</scope>
    <scope>FUNCTION</scope>
    <scope>CATALYTIC ACTIVITY</scope>
    <scope>MUTAGENESIS OF ASN-27; MET-56; ILE-149; GLN-191; LYS-219; LYS-252; ILE-290; LEU-293; ARG-298; ASN-307; SER-309; LYS-321; HIS-338; LYS-356; ASN-366; CYS-368; LYS-431 AND LYS-433</scope>
    <scope>SUBUNIT</scope>
    <scope>PROTEOLYTIC CLEAVAGE</scope>
</reference>
<reference key="8">
    <citation type="journal article" date="2017" name="Biochemistry">
        <title>Synthetic Triterpenoid Inhibition of Human Ghrelin O-Acyltransferase: The Involvement of a Functionally Required Cysteine Provides Mechanistic Insight into Ghrelin Acylation.</title>
        <authorList>
            <person name="McGovern-Gooch K.R."/>
            <person name="Mahajani N.S."/>
            <person name="Garagozzo A."/>
            <person name="Schramm A.J."/>
            <person name="Hannah L.G."/>
            <person name="Sieburg M.A."/>
            <person name="Chisholm J.D."/>
            <person name="Hougland J.L."/>
        </authorList>
    </citation>
    <scope>CATALYTIC ACTIVITY</scope>
    <scope>FUNCTION</scope>
    <scope>ACTIVITY REGULATION</scope>
</reference>
<dbReference type="EC" id="2.3.1.-" evidence="4 5 6 7 8 10"/>
<dbReference type="EMBL" id="EU721729">
    <property type="protein sequence ID" value="ACD93144.1"/>
    <property type="molecule type" value="mRNA"/>
</dbReference>
<dbReference type="EMBL" id="EU518496">
    <property type="protein sequence ID" value="ACB05874.1"/>
    <property type="molecule type" value="mRNA"/>
</dbReference>
<dbReference type="EMBL" id="AC167537">
    <property type="status" value="NOT_ANNOTATED_CDS"/>
    <property type="molecule type" value="Genomic_DNA"/>
</dbReference>
<dbReference type="EMBL" id="BC147844">
    <property type="protein sequence ID" value="AAI47845.1"/>
    <property type="status" value="ALT_INIT"/>
    <property type="molecule type" value="mRNA"/>
</dbReference>
<dbReference type="EMBL" id="BC147849">
    <property type="protein sequence ID" value="AAI47850.1"/>
    <property type="status" value="ALT_INIT"/>
    <property type="molecule type" value="mRNA"/>
</dbReference>
<dbReference type="CCDS" id="CCDS52540.1"/>
<dbReference type="RefSeq" id="NP_001119786.1">
    <property type="nucleotide sequence ID" value="NM_001126314.3"/>
</dbReference>
<dbReference type="SMR" id="P0C7A3"/>
<dbReference type="FunCoup" id="P0C7A3">
    <property type="interactions" value="204"/>
</dbReference>
<dbReference type="STRING" id="10090.ENSMUSP00000092988"/>
<dbReference type="BindingDB" id="P0C7A3"/>
<dbReference type="ChEMBL" id="CHEMBL1255134"/>
<dbReference type="SwissLipids" id="SLP:000001957"/>
<dbReference type="iPTMnet" id="P0C7A3"/>
<dbReference type="PhosphoSitePlus" id="P0C7A3"/>
<dbReference type="PaxDb" id="10090-ENSMUSP00000092988"/>
<dbReference type="Antibodypedia" id="54984">
    <property type="antibodies" value="202 antibodies from 22 providers"/>
</dbReference>
<dbReference type="Ensembl" id="ENSMUST00000095345.5">
    <property type="protein sequence ID" value="ENSMUSP00000092988.4"/>
    <property type="gene ID" value="ENSMUSG00000071113.5"/>
</dbReference>
<dbReference type="GeneID" id="234155"/>
<dbReference type="KEGG" id="mmu:234155"/>
<dbReference type="UCSC" id="uc012gch.1">
    <property type="organism name" value="mouse"/>
</dbReference>
<dbReference type="AGR" id="MGI:2685017"/>
<dbReference type="CTD" id="619373"/>
<dbReference type="MGI" id="MGI:2685017">
    <property type="gene designation" value="Mboat4"/>
</dbReference>
<dbReference type="VEuPathDB" id="HostDB:ENSMUSG00000071113"/>
<dbReference type="eggNOG" id="KOG2704">
    <property type="taxonomic scope" value="Eukaryota"/>
</dbReference>
<dbReference type="GeneTree" id="ENSGT01030000234564"/>
<dbReference type="HOGENOM" id="CLU_011340_3_1_1"/>
<dbReference type="InParanoid" id="P0C7A3"/>
<dbReference type="OMA" id="MDWLQLF"/>
<dbReference type="OrthoDB" id="286734at2759"/>
<dbReference type="PhylomeDB" id="P0C7A3"/>
<dbReference type="TreeFam" id="TF314906"/>
<dbReference type="Reactome" id="R-MMU-422085">
    <property type="pathway name" value="Synthesis, secretion, and deacylation of Ghrelin"/>
</dbReference>
<dbReference type="BioGRID-ORCS" id="234155">
    <property type="hits" value="0 hits in 79 CRISPR screens"/>
</dbReference>
<dbReference type="ChiTaRS" id="Mboat4">
    <property type="organism name" value="mouse"/>
</dbReference>
<dbReference type="PRO" id="PR:P0C7A3"/>
<dbReference type="Proteomes" id="UP000000589">
    <property type="component" value="Chromosome 8"/>
</dbReference>
<dbReference type="RNAct" id="P0C7A3">
    <property type="molecule type" value="protein"/>
</dbReference>
<dbReference type="Bgee" id="ENSMUSG00000071113">
    <property type="expression patterns" value="Expressed in blastoderm cell in morula and 66 other cell types or tissues"/>
</dbReference>
<dbReference type="GO" id="GO:0005783">
    <property type="term" value="C:endoplasmic reticulum"/>
    <property type="evidence" value="ECO:0000314"/>
    <property type="project" value="UniProtKB"/>
</dbReference>
<dbReference type="GO" id="GO:0005789">
    <property type="term" value="C:endoplasmic reticulum membrane"/>
    <property type="evidence" value="ECO:0000314"/>
    <property type="project" value="UniProtKB"/>
</dbReference>
<dbReference type="GO" id="GO:0016747">
    <property type="term" value="F:acyltransferase activity, transferring groups other than amino-acyl groups"/>
    <property type="evidence" value="ECO:0000314"/>
    <property type="project" value="UniProtKB"/>
</dbReference>
<dbReference type="GO" id="GO:0016412">
    <property type="term" value="F:serine O-acyltransferase activity"/>
    <property type="evidence" value="ECO:0000314"/>
    <property type="project" value="UniProtKB"/>
</dbReference>
<dbReference type="GO" id="GO:0018191">
    <property type="term" value="P:peptidyl-serine octanoylation"/>
    <property type="evidence" value="ECO:0000314"/>
    <property type="project" value="UniProtKB"/>
</dbReference>
<dbReference type="GO" id="GO:0043543">
    <property type="term" value="P:protein acylation"/>
    <property type="evidence" value="ECO:0000314"/>
    <property type="project" value="UniProtKB"/>
</dbReference>
<dbReference type="GO" id="GO:0051366">
    <property type="term" value="P:protein decanoylation"/>
    <property type="evidence" value="ECO:0000314"/>
    <property type="project" value="UniProtKB"/>
</dbReference>
<dbReference type="GO" id="GO:0018190">
    <property type="term" value="P:protein octanoylation"/>
    <property type="evidence" value="ECO:0000314"/>
    <property type="project" value="UniProtKB"/>
</dbReference>
<dbReference type="InterPro" id="IPR049941">
    <property type="entry name" value="LPLAT_7/PORCN-like"/>
</dbReference>
<dbReference type="InterPro" id="IPR004299">
    <property type="entry name" value="MBOAT_fam"/>
</dbReference>
<dbReference type="PANTHER" id="PTHR13906:SF3">
    <property type="entry name" value="GHRELIN O-ACYLTRANSFERASE"/>
    <property type="match status" value="1"/>
</dbReference>
<dbReference type="PANTHER" id="PTHR13906">
    <property type="entry name" value="PORCUPINE"/>
    <property type="match status" value="1"/>
</dbReference>
<dbReference type="Pfam" id="PF03062">
    <property type="entry name" value="MBOAT"/>
    <property type="match status" value="1"/>
</dbReference>
<gene>
    <name evidence="13" type="primary">Mboat4</name>
    <name type="synonym">Gm171</name>
    <name type="synonym">Goat</name>
</gene>